<name>PURA_POLNS</name>
<feature type="chain" id="PRO_1000089323" description="Adenylosuccinate synthetase">
    <location>
        <begin position="1"/>
        <end position="446"/>
    </location>
</feature>
<feature type="active site" description="Proton acceptor" evidence="1">
    <location>
        <position position="21"/>
    </location>
</feature>
<feature type="active site" description="Proton donor" evidence="1">
    <location>
        <position position="49"/>
    </location>
</feature>
<feature type="binding site" evidence="1">
    <location>
        <begin position="20"/>
        <end position="26"/>
    </location>
    <ligand>
        <name>GTP</name>
        <dbReference type="ChEBI" id="CHEBI:37565"/>
    </ligand>
</feature>
<feature type="binding site" description="in other chain" evidence="1">
    <location>
        <begin position="21"/>
        <end position="24"/>
    </location>
    <ligand>
        <name>IMP</name>
        <dbReference type="ChEBI" id="CHEBI:58053"/>
        <note>ligand shared between dimeric partners</note>
    </ligand>
</feature>
<feature type="binding site" evidence="1">
    <location>
        <position position="21"/>
    </location>
    <ligand>
        <name>Mg(2+)</name>
        <dbReference type="ChEBI" id="CHEBI:18420"/>
    </ligand>
</feature>
<feature type="binding site" description="in other chain" evidence="1">
    <location>
        <begin position="46"/>
        <end position="49"/>
    </location>
    <ligand>
        <name>IMP</name>
        <dbReference type="ChEBI" id="CHEBI:58053"/>
        <note>ligand shared between dimeric partners</note>
    </ligand>
</feature>
<feature type="binding site" evidence="1">
    <location>
        <begin position="48"/>
        <end position="50"/>
    </location>
    <ligand>
        <name>GTP</name>
        <dbReference type="ChEBI" id="CHEBI:37565"/>
    </ligand>
</feature>
<feature type="binding site" evidence="1">
    <location>
        <position position="48"/>
    </location>
    <ligand>
        <name>Mg(2+)</name>
        <dbReference type="ChEBI" id="CHEBI:18420"/>
    </ligand>
</feature>
<feature type="binding site" description="in other chain" evidence="1">
    <location>
        <position position="137"/>
    </location>
    <ligand>
        <name>IMP</name>
        <dbReference type="ChEBI" id="CHEBI:58053"/>
        <note>ligand shared between dimeric partners</note>
    </ligand>
</feature>
<feature type="binding site" evidence="1">
    <location>
        <position position="151"/>
    </location>
    <ligand>
        <name>IMP</name>
        <dbReference type="ChEBI" id="CHEBI:58053"/>
        <note>ligand shared between dimeric partners</note>
    </ligand>
</feature>
<feature type="binding site" description="in other chain" evidence="1">
    <location>
        <position position="232"/>
    </location>
    <ligand>
        <name>IMP</name>
        <dbReference type="ChEBI" id="CHEBI:58053"/>
        <note>ligand shared between dimeric partners</note>
    </ligand>
</feature>
<feature type="binding site" description="in other chain" evidence="1">
    <location>
        <position position="247"/>
    </location>
    <ligand>
        <name>IMP</name>
        <dbReference type="ChEBI" id="CHEBI:58053"/>
        <note>ligand shared between dimeric partners</note>
    </ligand>
</feature>
<feature type="binding site" evidence="1">
    <location>
        <begin position="315"/>
        <end position="321"/>
    </location>
    <ligand>
        <name>substrate</name>
    </ligand>
</feature>
<feature type="binding site" description="in other chain" evidence="1">
    <location>
        <position position="319"/>
    </location>
    <ligand>
        <name>IMP</name>
        <dbReference type="ChEBI" id="CHEBI:58053"/>
        <note>ligand shared between dimeric partners</note>
    </ligand>
</feature>
<feature type="binding site" evidence="1">
    <location>
        <position position="321"/>
    </location>
    <ligand>
        <name>GTP</name>
        <dbReference type="ChEBI" id="CHEBI:37565"/>
    </ligand>
</feature>
<feature type="binding site" evidence="1">
    <location>
        <begin position="347"/>
        <end position="349"/>
    </location>
    <ligand>
        <name>GTP</name>
        <dbReference type="ChEBI" id="CHEBI:37565"/>
    </ligand>
</feature>
<feature type="binding site" evidence="1">
    <location>
        <begin position="429"/>
        <end position="431"/>
    </location>
    <ligand>
        <name>GTP</name>
        <dbReference type="ChEBI" id="CHEBI:37565"/>
    </ligand>
</feature>
<evidence type="ECO:0000255" key="1">
    <source>
        <dbReference type="HAMAP-Rule" id="MF_00011"/>
    </source>
</evidence>
<sequence length="446" mass="48977">MSSKRQTKGCNVVVIGTQWGDEGKGKVVDWLTDHAQAVVRFQGGHNAGHTLIIGDKKTILRLIPSGIMHKTVICYIGNGVVLSPEALFKEIGELEAAGLDVQSRLKISEATTLILPYHVAIDHAREKKRGEAKIGTTGRGIGPAYEDKVARRALRVQDLFYPEKFSEQLRENLEYHNFMLTNYYGAEPVNYEKTLSEAMSYAERLKPMVMDVSSALYAAEQSGQNLLFEGAQGTLLDIDHGTYPYVTSSNCVAGNAAAGSGVGPDSLQYILGITKAYCTRVGAGPFPSELYDHDNPAKQDLIGIRLAEVGKEFGSVTGRPRRTGWLDAAALKRSIQINSLSGLCITKLDVLDGLETIRLCVGYTLDGKKLDMLPRGAESVARCEPIYEDFPGWKGTTFGIREWDKLPVEAQKFLRRIEEVAGKPIAMVSTGPERDETILLQHPFQD</sequence>
<reference key="1">
    <citation type="journal article" date="2013" name="Proc. Natl. Acad. Sci. U.S.A.">
        <title>Polynucleobacter necessarius, a model for genome reduction in both free-living and symbiotic bacteria.</title>
        <authorList>
            <person name="Boscaro V."/>
            <person name="Felletti M."/>
            <person name="Vannini C."/>
            <person name="Ackerman M.S."/>
            <person name="Chain P.S."/>
            <person name="Malfatti S."/>
            <person name="Vergez L.M."/>
            <person name="Shin M."/>
            <person name="Doak T.G."/>
            <person name="Lynch M."/>
            <person name="Petroni G."/>
        </authorList>
    </citation>
    <scope>NUCLEOTIDE SEQUENCE [LARGE SCALE GENOMIC DNA]</scope>
    <source>
        <strain>STIR1</strain>
    </source>
</reference>
<comment type="function">
    <text evidence="1">Plays an important role in the de novo pathway of purine nucleotide biosynthesis. Catalyzes the first committed step in the biosynthesis of AMP from IMP.</text>
</comment>
<comment type="catalytic activity">
    <reaction evidence="1">
        <text>IMP + L-aspartate + GTP = N(6)-(1,2-dicarboxyethyl)-AMP + GDP + phosphate + 2 H(+)</text>
        <dbReference type="Rhea" id="RHEA:15753"/>
        <dbReference type="ChEBI" id="CHEBI:15378"/>
        <dbReference type="ChEBI" id="CHEBI:29991"/>
        <dbReference type="ChEBI" id="CHEBI:37565"/>
        <dbReference type="ChEBI" id="CHEBI:43474"/>
        <dbReference type="ChEBI" id="CHEBI:57567"/>
        <dbReference type="ChEBI" id="CHEBI:58053"/>
        <dbReference type="ChEBI" id="CHEBI:58189"/>
        <dbReference type="EC" id="6.3.4.4"/>
    </reaction>
</comment>
<comment type="cofactor">
    <cofactor evidence="1">
        <name>Mg(2+)</name>
        <dbReference type="ChEBI" id="CHEBI:18420"/>
    </cofactor>
    <text evidence="1">Binds 1 Mg(2+) ion per subunit.</text>
</comment>
<comment type="pathway">
    <text evidence="1">Purine metabolism; AMP biosynthesis via de novo pathway; AMP from IMP: step 1/2.</text>
</comment>
<comment type="subunit">
    <text evidence="1">Homodimer.</text>
</comment>
<comment type="subcellular location">
    <subcellularLocation>
        <location evidence="1">Cytoplasm</location>
    </subcellularLocation>
</comment>
<comment type="similarity">
    <text evidence="1">Belongs to the adenylosuccinate synthetase family.</text>
</comment>
<organism>
    <name type="scientific">Polynucleobacter necessarius subsp. necessarius (strain STIR1)</name>
    <dbReference type="NCBI Taxonomy" id="452638"/>
    <lineage>
        <taxon>Bacteria</taxon>
        <taxon>Pseudomonadati</taxon>
        <taxon>Pseudomonadota</taxon>
        <taxon>Betaproteobacteria</taxon>
        <taxon>Burkholderiales</taxon>
        <taxon>Burkholderiaceae</taxon>
        <taxon>Polynucleobacter</taxon>
    </lineage>
</organism>
<gene>
    <name evidence="1" type="primary">purA</name>
    <name type="ordered locus">Pnec_0676</name>
</gene>
<dbReference type="EC" id="6.3.4.4" evidence="1"/>
<dbReference type="EMBL" id="CP001010">
    <property type="protein sequence ID" value="ACB43912.1"/>
    <property type="molecule type" value="Genomic_DNA"/>
</dbReference>
<dbReference type="SMR" id="B1XU85"/>
<dbReference type="STRING" id="452638.Pnec_0676"/>
<dbReference type="KEGG" id="pne:Pnec_0676"/>
<dbReference type="eggNOG" id="COG0104">
    <property type="taxonomic scope" value="Bacteria"/>
</dbReference>
<dbReference type="HOGENOM" id="CLU_029848_0_0_4"/>
<dbReference type="OrthoDB" id="9807553at2"/>
<dbReference type="UniPathway" id="UPA00075">
    <property type="reaction ID" value="UER00335"/>
</dbReference>
<dbReference type="GO" id="GO:0005737">
    <property type="term" value="C:cytoplasm"/>
    <property type="evidence" value="ECO:0007669"/>
    <property type="project" value="UniProtKB-SubCell"/>
</dbReference>
<dbReference type="GO" id="GO:0004019">
    <property type="term" value="F:adenylosuccinate synthase activity"/>
    <property type="evidence" value="ECO:0007669"/>
    <property type="project" value="UniProtKB-UniRule"/>
</dbReference>
<dbReference type="GO" id="GO:0005525">
    <property type="term" value="F:GTP binding"/>
    <property type="evidence" value="ECO:0007669"/>
    <property type="project" value="UniProtKB-UniRule"/>
</dbReference>
<dbReference type="GO" id="GO:0000287">
    <property type="term" value="F:magnesium ion binding"/>
    <property type="evidence" value="ECO:0007669"/>
    <property type="project" value="UniProtKB-UniRule"/>
</dbReference>
<dbReference type="GO" id="GO:0044208">
    <property type="term" value="P:'de novo' AMP biosynthetic process"/>
    <property type="evidence" value="ECO:0007669"/>
    <property type="project" value="UniProtKB-UniRule"/>
</dbReference>
<dbReference type="GO" id="GO:0046040">
    <property type="term" value="P:IMP metabolic process"/>
    <property type="evidence" value="ECO:0007669"/>
    <property type="project" value="TreeGrafter"/>
</dbReference>
<dbReference type="CDD" id="cd03108">
    <property type="entry name" value="AdSS"/>
    <property type="match status" value="1"/>
</dbReference>
<dbReference type="FunFam" id="1.10.300.10:FF:000001">
    <property type="entry name" value="Adenylosuccinate synthetase"/>
    <property type="match status" value="1"/>
</dbReference>
<dbReference type="FunFam" id="3.90.170.10:FF:000001">
    <property type="entry name" value="Adenylosuccinate synthetase"/>
    <property type="match status" value="1"/>
</dbReference>
<dbReference type="Gene3D" id="3.40.440.10">
    <property type="entry name" value="Adenylosuccinate Synthetase, subunit A, domain 1"/>
    <property type="match status" value="1"/>
</dbReference>
<dbReference type="Gene3D" id="1.10.300.10">
    <property type="entry name" value="Adenylosuccinate Synthetase, subunit A, domain 2"/>
    <property type="match status" value="1"/>
</dbReference>
<dbReference type="Gene3D" id="3.90.170.10">
    <property type="entry name" value="Adenylosuccinate Synthetase, subunit A, domain 3"/>
    <property type="match status" value="1"/>
</dbReference>
<dbReference type="HAMAP" id="MF_00011">
    <property type="entry name" value="Adenylosucc_synth"/>
    <property type="match status" value="1"/>
</dbReference>
<dbReference type="InterPro" id="IPR018220">
    <property type="entry name" value="Adenylosuccin_syn_GTP-bd"/>
</dbReference>
<dbReference type="InterPro" id="IPR033128">
    <property type="entry name" value="Adenylosuccin_syn_Lys_AS"/>
</dbReference>
<dbReference type="InterPro" id="IPR042109">
    <property type="entry name" value="Adenylosuccinate_synth_dom1"/>
</dbReference>
<dbReference type="InterPro" id="IPR042110">
    <property type="entry name" value="Adenylosuccinate_synth_dom2"/>
</dbReference>
<dbReference type="InterPro" id="IPR042111">
    <property type="entry name" value="Adenylosuccinate_synth_dom3"/>
</dbReference>
<dbReference type="InterPro" id="IPR001114">
    <property type="entry name" value="Adenylosuccinate_synthetase"/>
</dbReference>
<dbReference type="InterPro" id="IPR027417">
    <property type="entry name" value="P-loop_NTPase"/>
</dbReference>
<dbReference type="NCBIfam" id="NF002223">
    <property type="entry name" value="PRK01117.1"/>
    <property type="match status" value="1"/>
</dbReference>
<dbReference type="NCBIfam" id="TIGR00184">
    <property type="entry name" value="purA"/>
    <property type="match status" value="1"/>
</dbReference>
<dbReference type="PANTHER" id="PTHR11846">
    <property type="entry name" value="ADENYLOSUCCINATE SYNTHETASE"/>
    <property type="match status" value="1"/>
</dbReference>
<dbReference type="PANTHER" id="PTHR11846:SF0">
    <property type="entry name" value="ADENYLOSUCCINATE SYNTHETASE"/>
    <property type="match status" value="1"/>
</dbReference>
<dbReference type="Pfam" id="PF00709">
    <property type="entry name" value="Adenylsucc_synt"/>
    <property type="match status" value="1"/>
</dbReference>
<dbReference type="SMART" id="SM00788">
    <property type="entry name" value="Adenylsucc_synt"/>
    <property type="match status" value="1"/>
</dbReference>
<dbReference type="SUPFAM" id="SSF52540">
    <property type="entry name" value="P-loop containing nucleoside triphosphate hydrolases"/>
    <property type="match status" value="1"/>
</dbReference>
<dbReference type="PROSITE" id="PS01266">
    <property type="entry name" value="ADENYLOSUCCIN_SYN_1"/>
    <property type="match status" value="1"/>
</dbReference>
<dbReference type="PROSITE" id="PS00513">
    <property type="entry name" value="ADENYLOSUCCIN_SYN_2"/>
    <property type="match status" value="1"/>
</dbReference>
<accession>B1XU85</accession>
<keyword id="KW-0963">Cytoplasm</keyword>
<keyword id="KW-0342">GTP-binding</keyword>
<keyword id="KW-0436">Ligase</keyword>
<keyword id="KW-0460">Magnesium</keyword>
<keyword id="KW-0479">Metal-binding</keyword>
<keyword id="KW-0547">Nucleotide-binding</keyword>
<keyword id="KW-0658">Purine biosynthesis</keyword>
<proteinExistence type="inferred from homology"/>
<protein>
    <recommendedName>
        <fullName evidence="1">Adenylosuccinate synthetase</fullName>
        <shortName evidence="1">AMPSase</shortName>
        <shortName evidence="1">AdSS</shortName>
        <ecNumber evidence="1">6.3.4.4</ecNumber>
    </recommendedName>
    <alternativeName>
        <fullName evidence="1">IMP--aspartate ligase</fullName>
    </alternativeName>
</protein>